<organism>
    <name type="scientific">Prochlorococcus marinus (strain SARG / CCMP1375 / SS120)</name>
    <dbReference type="NCBI Taxonomy" id="167539"/>
    <lineage>
        <taxon>Bacteria</taxon>
        <taxon>Bacillati</taxon>
        <taxon>Cyanobacteriota</taxon>
        <taxon>Cyanophyceae</taxon>
        <taxon>Synechococcales</taxon>
        <taxon>Prochlorococcaceae</taxon>
        <taxon>Prochlorococcus</taxon>
    </lineage>
</organism>
<name>ATPA_PROMA</name>
<protein>
    <recommendedName>
        <fullName evidence="2">ATP synthase subunit alpha</fullName>
        <ecNumber evidence="2">7.1.2.2</ecNumber>
    </recommendedName>
    <alternativeName>
        <fullName evidence="2">ATP synthase F1 sector subunit alpha</fullName>
    </alternativeName>
    <alternativeName>
        <fullName evidence="2">F-ATPase subunit alpha</fullName>
    </alternativeName>
</protein>
<reference key="1">
    <citation type="journal article" date="2003" name="Proc. Natl. Acad. Sci. U.S.A.">
        <title>Genome sequence of the cyanobacterium Prochlorococcus marinus SS120, a nearly minimal oxyphototrophic genome.</title>
        <authorList>
            <person name="Dufresne A."/>
            <person name="Salanoubat M."/>
            <person name="Partensky F."/>
            <person name="Artiguenave F."/>
            <person name="Axmann I.M."/>
            <person name="Barbe V."/>
            <person name="Duprat S."/>
            <person name="Galperin M.Y."/>
            <person name="Koonin E.V."/>
            <person name="Le Gall F."/>
            <person name="Makarova K.S."/>
            <person name="Ostrowski M."/>
            <person name="Oztas S."/>
            <person name="Robert C."/>
            <person name="Rogozin I.B."/>
            <person name="Scanlan D.J."/>
            <person name="Tandeau de Marsac N."/>
            <person name="Weissenbach J."/>
            <person name="Wincker P."/>
            <person name="Wolf Y.I."/>
            <person name="Hess W.R."/>
        </authorList>
    </citation>
    <scope>NUCLEOTIDE SEQUENCE [LARGE SCALE GENOMIC DNA]</scope>
    <source>
        <strain>SARG / CCMP1375 / SS120</strain>
    </source>
</reference>
<gene>
    <name evidence="2" type="primary">atpA</name>
    <name type="synonym">pro1604</name>
    <name type="ordered locus">Pro_1604</name>
</gene>
<feature type="chain" id="PRO_0000238320" description="ATP synthase subunit alpha">
    <location>
        <begin position="1"/>
        <end position="505"/>
    </location>
</feature>
<feature type="binding site" evidence="2">
    <location>
        <begin position="170"/>
        <end position="177"/>
    </location>
    <ligand>
        <name>ATP</name>
        <dbReference type="ChEBI" id="CHEBI:30616"/>
    </ligand>
</feature>
<feature type="site" description="Required for activity" evidence="2">
    <location>
        <position position="363"/>
    </location>
</feature>
<accession>Q7VA63</accession>
<proteinExistence type="inferred from homology"/>
<evidence type="ECO:0000250" key="1"/>
<evidence type="ECO:0000255" key="2">
    <source>
        <dbReference type="HAMAP-Rule" id="MF_01346"/>
    </source>
</evidence>
<sequence length="505" mass="53915">MVSIRPDEISSILKKQIADYDKSVSVSNVGTVLQIGDGIARVYGLEKAMAGELVEFEDGTEGIALNLEDDNVGAVLMGEGLGIQEGSTVKATGKIASVPVGDAMLGRVVNPLGQPVDGNGEIATSDSRLIESLAPGIIKRKSVHEPMQTGITSIDAMIPIGRGQRELIIGDRQTGKTAIAIDTIINQKGQDVVCVYVAVGQKSASVAQVVEVLREKGALEYTIVVNASASEAAALQYLAPYTGAAIAEHFMYQGKATLVIYDDLTKQAQAYRQMSLLLRRPPGREAYPGDVFYCHSRLLERAAKLSDAMGSGSMTALPIIETQAGDVSAYIPTNVISITDGQIFLSADLFNSGLRPAINVGISVSRVGGAAQTKAIKKIAGTLKLELAQFDELAAFSQFASDLDEATQQQLERGKRLRELLKQAQFAPLNLAEQVAVVYAGVKGLIDEVPVEQVTQFAAELREYLKTSKPDYINQVLTEKKLSDDIEAVLKESINEVKSSMLAAA</sequence>
<keyword id="KW-0066">ATP synthesis</keyword>
<keyword id="KW-0067">ATP-binding</keyword>
<keyword id="KW-0139">CF(1)</keyword>
<keyword id="KW-0375">Hydrogen ion transport</keyword>
<keyword id="KW-0406">Ion transport</keyword>
<keyword id="KW-0472">Membrane</keyword>
<keyword id="KW-0547">Nucleotide-binding</keyword>
<keyword id="KW-1185">Reference proteome</keyword>
<keyword id="KW-0793">Thylakoid</keyword>
<keyword id="KW-1278">Translocase</keyword>
<keyword id="KW-0813">Transport</keyword>
<comment type="function">
    <text evidence="2">Produces ATP from ADP in the presence of a proton gradient across the membrane. The alpha chain is a regulatory subunit.</text>
</comment>
<comment type="catalytic activity">
    <reaction evidence="2">
        <text>ATP + H2O + 4 H(+)(in) = ADP + phosphate + 5 H(+)(out)</text>
        <dbReference type="Rhea" id="RHEA:57720"/>
        <dbReference type="ChEBI" id="CHEBI:15377"/>
        <dbReference type="ChEBI" id="CHEBI:15378"/>
        <dbReference type="ChEBI" id="CHEBI:30616"/>
        <dbReference type="ChEBI" id="CHEBI:43474"/>
        <dbReference type="ChEBI" id="CHEBI:456216"/>
        <dbReference type="EC" id="7.1.2.2"/>
    </reaction>
</comment>
<comment type="subunit">
    <text evidence="1">F-type ATPases have 2 components, CF(1) - the catalytic core - and CF(0) - the membrane proton channel. CF(1) has five subunits: alpha(3), beta(3), gamma(1), delta(1), epsilon(1). CF(0) has four main subunits: a(1), b(1), b'(1) and c(9-12) (By similarity).</text>
</comment>
<comment type="subcellular location">
    <subcellularLocation>
        <location evidence="2">Cellular thylakoid membrane</location>
        <topology evidence="2">Peripheral membrane protein</topology>
    </subcellularLocation>
</comment>
<comment type="similarity">
    <text evidence="2">Belongs to the ATPase alpha/beta chains family.</text>
</comment>
<dbReference type="EC" id="7.1.2.2" evidence="2"/>
<dbReference type="EMBL" id="AE017126">
    <property type="protein sequence ID" value="AAQ00648.1"/>
    <property type="molecule type" value="Genomic_DNA"/>
</dbReference>
<dbReference type="RefSeq" id="NP_875995.1">
    <property type="nucleotide sequence ID" value="NC_005042.1"/>
</dbReference>
<dbReference type="RefSeq" id="WP_011125754.1">
    <property type="nucleotide sequence ID" value="NC_005042.1"/>
</dbReference>
<dbReference type="SMR" id="Q7VA63"/>
<dbReference type="STRING" id="167539.Pro_1604"/>
<dbReference type="EnsemblBacteria" id="AAQ00648">
    <property type="protein sequence ID" value="AAQ00648"/>
    <property type="gene ID" value="Pro_1604"/>
</dbReference>
<dbReference type="KEGG" id="pma:Pro_1604"/>
<dbReference type="PATRIC" id="fig|167539.5.peg.1695"/>
<dbReference type="eggNOG" id="COG0056">
    <property type="taxonomic scope" value="Bacteria"/>
</dbReference>
<dbReference type="HOGENOM" id="CLU_010091_2_1_3"/>
<dbReference type="OrthoDB" id="9803053at2"/>
<dbReference type="Proteomes" id="UP000001420">
    <property type="component" value="Chromosome"/>
</dbReference>
<dbReference type="GO" id="GO:0031676">
    <property type="term" value="C:plasma membrane-derived thylakoid membrane"/>
    <property type="evidence" value="ECO:0007669"/>
    <property type="project" value="UniProtKB-SubCell"/>
</dbReference>
<dbReference type="GO" id="GO:0045259">
    <property type="term" value="C:proton-transporting ATP synthase complex"/>
    <property type="evidence" value="ECO:0007669"/>
    <property type="project" value="UniProtKB-KW"/>
</dbReference>
<dbReference type="GO" id="GO:0043531">
    <property type="term" value="F:ADP binding"/>
    <property type="evidence" value="ECO:0007669"/>
    <property type="project" value="TreeGrafter"/>
</dbReference>
<dbReference type="GO" id="GO:0005524">
    <property type="term" value="F:ATP binding"/>
    <property type="evidence" value="ECO:0007669"/>
    <property type="project" value="UniProtKB-UniRule"/>
</dbReference>
<dbReference type="GO" id="GO:0046933">
    <property type="term" value="F:proton-transporting ATP synthase activity, rotational mechanism"/>
    <property type="evidence" value="ECO:0007669"/>
    <property type="project" value="UniProtKB-UniRule"/>
</dbReference>
<dbReference type="CDD" id="cd18113">
    <property type="entry name" value="ATP-synt_F1_alpha_C"/>
    <property type="match status" value="1"/>
</dbReference>
<dbReference type="CDD" id="cd18116">
    <property type="entry name" value="ATP-synt_F1_alpha_N"/>
    <property type="match status" value="1"/>
</dbReference>
<dbReference type="CDD" id="cd01132">
    <property type="entry name" value="F1-ATPase_alpha_CD"/>
    <property type="match status" value="1"/>
</dbReference>
<dbReference type="FunFam" id="1.20.150.20:FF:000001">
    <property type="entry name" value="ATP synthase subunit alpha"/>
    <property type="match status" value="1"/>
</dbReference>
<dbReference type="FunFam" id="2.40.30.20:FF:000001">
    <property type="entry name" value="ATP synthase subunit alpha"/>
    <property type="match status" value="1"/>
</dbReference>
<dbReference type="FunFam" id="3.40.50.300:FF:000002">
    <property type="entry name" value="ATP synthase subunit alpha"/>
    <property type="match status" value="1"/>
</dbReference>
<dbReference type="Gene3D" id="2.40.30.20">
    <property type="match status" value="1"/>
</dbReference>
<dbReference type="Gene3D" id="1.20.150.20">
    <property type="entry name" value="ATP synthase alpha/beta chain, C-terminal domain"/>
    <property type="match status" value="1"/>
</dbReference>
<dbReference type="Gene3D" id="3.40.50.300">
    <property type="entry name" value="P-loop containing nucleotide triphosphate hydrolases"/>
    <property type="match status" value="1"/>
</dbReference>
<dbReference type="HAMAP" id="MF_01346">
    <property type="entry name" value="ATP_synth_alpha_bact"/>
    <property type="match status" value="1"/>
</dbReference>
<dbReference type="InterPro" id="IPR023366">
    <property type="entry name" value="ATP_synth_asu-like_sf"/>
</dbReference>
<dbReference type="InterPro" id="IPR000793">
    <property type="entry name" value="ATP_synth_asu_C"/>
</dbReference>
<dbReference type="InterPro" id="IPR038376">
    <property type="entry name" value="ATP_synth_asu_C_sf"/>
</dbReference>
<dbReference type="InterPro" id="IPR033732">
    <property type="entry name" value="ATP_synth_F1_a_nt-bd_dom"/>
</dbReference>
<dbReference type="InterPro" id="IPR005294">
    <property type="entry name" value="ATP_synth_F1_asu"/>
</dbReference>
<dbReference type="InterPro" id="IPR020003">
    <property type="entry name" value="ATPase_a/bsu_AS"/>
</dbReference>
<dbReference type="InterPro" id="IPR004100">
    <property type="entry name" value="ATPase_F1/V1/A1_a/bsu_N"/>
</dbReference>
<dbReference type="InterPro" id="IPR036121">
    <property type="entry name" value="ATPase_F1/V1/A1_a/bsu_N_sf"/>
</dbReference>
<dbReference type="InterPro" id="IPR000194">
    <property type="entry name" value="ATPase_F1/V1/A1_a/bsu_nucl-bd"/>
</dbReference>
<dbReference type="InterPro" id="IPR027417">
    <property type="entry name" value="P-loop_NTPase"/>
</dbReference>
<dbReference type="NCBIfam" id="TIGR00962">
    <property type="entry name" value="atpA"/>
    <property type="match status" value="1"/>
</dbReference>
<dbReference type="NCBIfam" id="NF009884">
    <property type="entry name" value="PRK13343.1"/>
    <property type="match status" value="1"/>
</dbReference>
<dbReference type="PANTHER" id="PTHR48082">
    <property type="entry name" value="ATP SYNTHASE SUBUNIT ALPHA, MITOCHONDRIAL"/>
    <property type="match status" value="1"/>
</dbReference>
<dbReference type="PANTHER" id="PTHR48082:SF2">
    <property type="entry name" value="ATP SYNTHASE SUBUNIT ALPHA, MITOCHONDRIAL"/>
    <property type="match status" value="1"/>
</dbReference>
<dbReference type="Pfam" id="PF00006">
    <property type="entry name" value="ATP-synt_ab"/>
    <property type="match status" value="1"/>
</dbReference>
<dbReference type="Pfam" id="PF00306">
    <property type="entry name" value="ATP-synt_ab_C"/>
    <property type="match status" value="1"/>
</dbReference>
<dbReference type="Pfam" id="PF02874">
    <property type="entry name" value="ATP-synt_ab_N"/>
    <property type="match status" value="1"/>
</dbReference>
<dbReference type="PIRSF" id="PIRSF039088">
    <property type="entry name" value="F_ATPase_subunit_alpha"/>
    <property type="match status" value="1"/>
</dbReference>
<dbReference type="SUPFAM" id="SSF47917">
    <property type="entry name" value="C-terminal domain of alpha and beta subunits of F1 ATP synthase"/>
    <property type="match status" value="1"/>
</dbReference>
<dbReference type="SUPFAM" id="SSF50615">
    <property type="entry name" value="N-terminal domain of alpha and beta subunits of F1 ATP synthase"/>
    <property type="match status" value="1"/>
</dbReference>
<dbReference type="SUPFAM" id="SSF52540">
    <property type="entry name" value="P-loop containing nucleoside triphosphate hydrolases"/>
    <property type="match status" value="1"/>
</dbReference>
<dbReference type="PROSITE" id="PS00152">
    <property type="entry name" value="ATPASE_ALPHA_BETA"/>
    <property type="match status" value="1"/>
</dbReference>